<accession>P13249</accession>
<protein>
    <recommendedName>
        <fullName>Puromycin N-acetyltransferase</fullName>
        <ecNumber>2.3.-.-</ecNumber>
    </recommendedName>
</protein>
<feature type="chain" id="PRO_0000068578" description="Puromycin N-acetyltransferase">
    <location>
        <begin position="1"/>
        <end position="199"/>
    </location>
</feature>
<feature type="domain" description="N-acetyltransferase" evidence="1">
    <location>
        <begin position="6"/>
        <end position="198"/>
    </location>
</feature>
<feature type="strand" evidence="2">
    <location>
        <begin position="8"/>
        <end position="10"/>
    </location>
</feature>
<feature type="helix" evidence="2">
    <location>
        <begin position="13"/>
        <end position="15"/>
    </location>
</feature>
<feature type="helix" evidence="2">
    <location>
        <begin position="16"/>
        <end position="26"/>
    </location>
</feature>
<feature type="turn" evidence="2">
    <location>
        <begin position="27"/>
        <end position="29"/>
    </location>
</feature>
<feature type="helix" evidence="2">
    <location>
        <begin position="31"/>
        <end position="36"/>
    </location>
</feature>
<feature type="helix" evidence="2">
    <location>
        <begin position="42"/>
        <end position="56"/>
    </location>
</feature>
<feature type="helix" evidence="2">
    <location>
        <begin position="58"/>
        <end position="61"/>
    </location>
</feature>
<feature type="strand" evidence="2">
    <location>
        <begin position="62"/>
        <end position="67"/>
    </location>
</feature>
<feature type="helix" evidence="2">
    <location>
        <begin position="68"/>
        <end position="70"/>
    </location>
</feature>
<feature type="strand" evidence="2">
    <location>
        <begin position="72"/>
        <end position="77"/>
    </location>
</feature>
<feature type="helix" evidence="2">
    <location>
        <begin position="84"/>
        <end position="99"/>
    </location>
</feature>
<feature type="helix" evidence="2">
    <location>
        <begin position="100"/>
        <end position="102"/>
    </location>
</feature>
<feature type="helix" evidence="2">
    <location>
        <begin position="103"/>
        <end position="113"/>
    </location>
</feature>
<feature type="helix" evidence="2">
    <location>
        <begin position="114"/>
        <end position="116"/>
    </location>
</feature>
<feature type="strand" evidence="2">
    <location>
        <begin position="123"/>
        <end position="130"/>
    </location>
</feature>
<feature type="helix" evidence="2">
    <location>
        <begin position="132"/>
        <end position="134"/>
    </location>
</feature>
<feature type="helix" evidence="2">
    <location>
        <begin position="139"/>
        <end position="154"/>
    </location>
</feature>
<feature type="strand" evidence="2">
    <location>
        <begin position="158"/>
        <end position="163"/>
    </location>
</feature>
<feature type="helix" evidence="2">
    <location>
        <begin position="165"/>
        <end position="167"/>
    </location>
</feature>
<feature type="helix" evidence="2">
    <location>
        <begin position="168"/>
        <end position="173"/>
    </location>
</feature>
<feature type="strand" evidence="2">
    <location>
        <begin position="177"/>
        <end position="182"/>
    </location>
</feature>
<feature type="strand" evidence="2">
    <location>
        <begin position="190"/>
        <end position="195"/>
    </location>
</feature>
<name>PUAC_STRAD</name>
<comment type="function">
    <text>Detoxification of puromycin.</text>
</comment>
<gene>
    <name type="primary">pac</name>
</gene>
<evidence type="ECO:0000255" key="1">
    <source>
        <dbReference type="PROSITE-ProRule" id="PRU00532"/>
    </source>
</evidence>
<evidence type="ECO:0007829" key="2">
    <source>
        <dbReference type="PDB" id="7K0A"/>
    </source>
</evidence>
<reference key="1">
    <citation type="journal article" date="1989" name="Gene">
        <title>Molecular analysis of the pac gene encoding a puromycin N-acetyl transferase from Streptomyces alboniger.</title>
        <authorList>
            <person name="Lacalle R.A."/>
            <person name="Pulido D."/>
            <person name="Vara J."/>
            <person name="Zalacain M."/>
            <person name="Jimenez A."/>
        </authorList>
    </citation>
    <scope>NUCLEOTIDE SEQUENCE [GENOMIC DNA]</scope>
    <source>
        <strain>ATCC 12461 / DSM 40043 / JCM 4309 / NBRC 12738 / NCIMB 13007 / NRRL B-2403</strain>
    </source>
</reference>
<organism>
    <name type="scientific">Streptomyces alboniger</name>
    <dbReference type="NCBI Taxonomy" id="132473"/>
    <lineage>
        <taxon>Bacteria</taxon>
        <taxon>Bacillati</taxon>
        <taxon>Actinomycetota</taxon>
        <taxon>Actinomycetes</taxon>
        <taxon>Kitasatosporales</taxon>
        <taxon>Streptomycetaceae</taxon>
        <taxon>Streptomyces</taxon>
        <taxon>Streptomyces aurantiacus group</taxon>
    </lineage>
</organism>
<sequence length="199" mass="21496">MTEYKPTVRLATRDDVPRAVRTLAAAFADYPATRHTVDPDRHIERVTELQELFLTRVGLDIGKVWVADDGAAVAVWTTPESVEAGAVFAEIGPRMAELSGSRLAAQQQMEGLLAPHRPKEPAWFLATVGVSPDHQGKGLGSAVVLPGVEAAERAGVPAFLETSAPRNLPFYERLGFTVTADVEVPEGPRTWCMTRKPGA</sequence>
<dbReference type="EC" id="2.3.-.-"/>
<dbReference type="EMBL" id="M25346">
    <property type="protein sequence ID" value="AAA64928.1"/>
    <property type="molecule type" value="Genomic_DNA"/>
</dbReference>
<dbReference type="PIR" id="JU0052">
    <property type="entry name" value="JU0052"/>
</dbReference>
<dbReference type="RefSeq" id="WP_055528321.1">
    <property type="nucleotide sequence ID" value="NZ_LIQN01000059.1"/>
</dbReference>
<dbReference type="PDB" id="7K09">
    <property type="method" value="X-ray"/>
    <property type="resolution" value="2.31 A"/>
    <property type="chains" value="A/B/C/D/E/F=2-199"/>
</dbReference>
<dbReference type="PDB" id="7K0A">
    <property type="method" value="X-ray"/>
    <property type="resolution" value="2.00 A"/>
    <property type="chains" value="A/B=2-199"/>
</dbReference>
<dbReference type="PDBsum" id="7K09"/>
<dbReference type="PDBsum" id="7K0A"/>
<dbReference type="SMR" id="P13249"/>
<dbReference type="OrthoDB" id="7057833at2"/>
<dbReference type="BioCyc" id="MetaCyc:MONOMER-13983"/>
<dbReference type="GO" id="GO:0016747">
    <property type="term" value="F:acyltransferase activity, transferring groups other than amino-acyl groups"/>
    <property type="evidence" value="ECO:0007669"/>
    <property type="project" value="InterPro"/>
</dbReference>
<dbReference type="GO" id="GO:0046677">
    <property type="term" value="P:response to antibiotic"/>
    <property type="evidence" value="ECO:0007669"/>
    <property type="project" value="UniProtKB-KW"/>
</dbReference>
<dbReference type="CDD" id="cd04301">
    <property type="entry name" value="NAT_SF"/>
    <property type="match status" value="1"/>
</dbReference>
<dbReference type="Gene3D" id="3.40.630.30">
    <property type="match status" value="1"/>
</dbReference>
<dbReference type="InterPro" id="IPR016181">
    <property type="entry name" value="Acyl_CoA_acyltransferase"/>
</dbReference>
<dbReference type="InterPro" id="IPR000182">
    <property type="entry name" value="GNAT_dom"/>
</dbReference>
<dbReference type="InterPro" id="IPR052523">
    <property type="entry name" value="Trichothecene_AcTrans"/>
</dbReference>
<dbReference type="PANTHER" id="PTHR42791">
    <property type="entry name" value="GNAT FAMILY ACETYLTRANSFERASE"/>
    <property type="match status" value="1"/>
</dbReference>
<dbReference type="PANTHER" id="PTHR42791:SF1">
    <property type="entry name" value="N-ACETYLTRANSFERASE DOMAIN-CONTAINING PROTEIN"/>
    <property type="match status" value="1"/>
</dbReference>
<dbReference type="Pfam" id="PF00583">
    <property type="entry name" value="Acetyltransf_1"/>
    <property type="match status" value="1"/>
</dbReference>
<dbReference type="SUPFAM" id="SSF55729">
    <property type="entry name" value="Acyl-CoA N-acyltransferases (Nat)"/>
    <property type="match status" value="1"/>
</dbReference>
<dbReference type="PROSITE" id="PS51186">
    <property type="entry name" value="GNAT"/>
    <property type="match status" value="1"/>
</dbReference>
<keyword id="KW-0002">3D-structure</keyword>
<keyword id="KW-0012">Acyltransferase</keyword>
<keyword id="KW-0046">Antibiotic resistance</keyword>
<keyword id="KW-0808">Transferase</keyword>
<proteinExistence type="evidence at protein level"/>